<protein>
    <recommendedName>
        <fullName evidence="1">Ubiquinone biosynthesis O-methyltransferase</fullName>
    </recommendedName>
    <alternativeName>
        <fullName evidence="1">2-polyprenyl-6-hydroxyphenol methylase</fullName>
        <ecNumber evidence="1">2.1.1.222</ecNumber>
    </alternativeName>
    <alternativeName>
        <fullName evidence="1">3-demethylubiquinone 3-O-methyltransferase</fullName>
        <ecNumber evidence="1">2.1.1.64</ecNumber>
    </alternativeName>
</protein>
<dbReference type="EC" id="2.1.1.222" evidence="1"/>
<dbReference type="EC" id="2.1.1.64" evidence="1"/>
<dbReference type="EMBL" id="CP001052">
    <property type="protein sequence ID" value="ACD17405.1"/>
    <property type="molecule type" value="Genomic_DNA"/>
</dbReference>
<dbReference type="RefSeq" id="WP_012433984.1">
    <property type="nucleotide sequence ID" value="NC_010681.1"/>
</dbReference>
<dbReference type="SMR" id="B2T641"/>
<dbReference type="STRING" id="398527.Bphyt_3011"/>
<dbReference type="KEGG" id="bpy:Bphyt_3011"/>
<dbReference type="eggNOG" id="COG2227">
    <property type="taxonomic scope" value="Bacteria"/>
</dbReference>
<dbReference type="HOGENOM" id="CLU_042432_5_0_4"/>
<dbReference type="OrthoDB" id="9801538at2"/>
<dbReference type="UniPathway" id="UPA00232"/>
<dbReference type="Proteomes" id="UP000001739">
    <property type="component" value="Chromosome 1"/>
</dbReference>
<dbReference type="GO" id="GO:0102208">
    <property type="term" value="F:2-polyprenyl-6-hydroxyphenol methylase activity"/>
    <property type="evidence" value="ECO:0007669"/>
    <property type="project" value="UniProtKB-EC"/>
</dbReference>
<dbReference type="GO" id="GO:0061542">
    <property type="term" value="F:3-demethylubiquinol 3-O-methyltransferase activity"/>
    <property type="evidence" value="ECO:0007669"/>
    <property type="project" value="UniProtKB-UniRule"/>
</dbReference>
<dbReference type="GO" id="GO:0010420">
    <property type="term" value="F:polyprenyldihydroxybenzoate methyltransferase activity"/>
    <property type="evidence" value="ECO:0007669"/>
    <property type="project" value="InterPro"/>
</dbReference>
<dbReference type="GO" id="GO:0032259">
    <property type="term" value="P:methylation"/>
    <property type="evidence" value="ECO:0007669"/>
    <property type="project" value="UniProtKB-KW"/>
</dbReference>
<dbReference type="CDD" id="cd02440">
    <property type="entry name" value="AdoMet_MTases"/>
    <property type="match status" value="1"/>
</dbReference>
<dbReference type="FunFam" id="3.40.50.150:FF:000028">
    <property type="entry name" value="Ubiquinone biosynthesis O-methyltransferase"/>
    <property type="match status" value="1"/>
</dbReference>
<dbReference type="Gene3D" id="3.40.50.150">
    <property type="entry name" value="Vaccinia Virus protein VP39"/>
    <property type="match status" value="1"/>
</dbReference>
<dbReference type="HAMAP" id="MF_00472">
    <property type="entry name" value="UbiG"/>
    <property type="match status" value="1"/>
</dbReference>
<dbReference type="InterPro" id="IPR029063">
    <property type="entry name" value="SAM-dependent_MTases_sf"/>
</dbReference>
<dbReference type="InterPro" id="IPR010233">
    <property type="entry name" value="UbiG_MeTrfase"/>
</dbReference>
<dbReference type="NCBIfam" id="TIGR01983">
    <property type="entry name" value="UbiG"/>
    <property type="match status" value="1"/>
</dbReference>
<dbReference type="PANTHER" id="PTHR43464">
    <property type="entry name" value="METHYLTRANSFERASE"/>
    <property type="match status" value="1"/>
</dbReference>
<dbReference type="PANTHER" id="PTHR43464:SF19">
    <property type="entry name" value="UBIQUINONE BIOSYNTHESIS O-METHYLTRANSFERASE, MITOCHONDRIAL"/>
    <property type="match status" value="1"/>
</dbReference>
<dbReference type="Pfam" id="PF13489">
    <property type="entry name" value="Methyltransf_23"/>
    <property type="match status" value="1"/>
</dbReference>
<dbReference type="SUPFAM" id="SSF53335">
    <property type="entry name" value="S-adenosyl-L-methionine-dependent methyltransferases"/>
    <property type="match status" value="1"/>
</dbReference>
<organism>
    <name type="scientific">Paraburkholderia phytofirmans (strain DSM 17436 / LMG 22146 / PsJN)</name>
    <name type="common">Burkholderia phytofirmans</name>
    <dbReference type="NCBI Taxonomy" id="398527"/>
    <lineage>
        <taxon>Bacteria</taxon>
        <taxon>Pseudomonadati</taxon>
        <taxon>Pseudomonadota</taxon>
        <taxon>Betaproteobacteria</taxon>
        <taxon>Burkholderiales</taxon>
        <taxon>Burkholderiaceae</taxon>
        <taxon>Paraburkholderia</taxon>
    </lineage>
</organism>
<sequence>MTNADPHELQKFSDLAHRWWDPNAEFKPLHELNPIRLKWIDAHAHLAGKTVLDIGCGGGILSESMAGLGAHVKGIDLSTQALGVADLHSLESGVTVDYEEIAAEALAAREPAKYDVVTCMEMLEHVPQPAAIVEACKTLVKPGGWVFFSTLNRNVKSYLFAVIGAEYIARMLPKGTHDYARFIRPSELASFVRAADLRTADIKGIVYNPLSKHFMLSADTSVNYMLACRRDV</sequence>
<keyword id="KW-0489">Methyltransferase</keyword>
<keyword id="KW-0949">S-adenosyl-L-methionine</keyword>
<keyword id="KW-0808">Transferase</keyword>
<keyword id="KW-0831">Ubiquinone biosynthesis</keyword>
<accession>B2T641</accession>
<proteinExistence type="inferred from homology"/>
<evidence type="ECO:0000255" key="1">
    <source>
        <dbReference type="HAMAP-Rule" id="MF_00472"/>
    </source>
</evidence>
<feature type="chain" id="PRO_1000199674" description="Ubiquinone biosynthesis O-methyltransferase">
    <location>
        <begin position="1"/>
        <end position="232"/>
    </location>
</feature>
<feature type="binding site" evidence="1">
    <location>
        <position position="36"/>
    </location>
    <ligand>
        <name>S-adenosyl-L-methionine</name>
        <dbReference type="ChEBI" id="CHEBI:59789"/>
    </ligand>
</feature>
<feature type="binding site" evidence="1">
    <location>
        <position position="55"/>
    </location>
    <ligand>
        <name>S-adenosyl-L-methionine</name>
        <dbReference type="ChEBI" id="CHEBI:59789"/>
    </ligand>
</feature>
<feature type="binding site" evidence="1">
    <location>
        <position position="76"/>
    </location>
    <ligand>
        <name>S-adenosyl-L-methionine</name>
        <dbReference type="ChEBI" id="CHEBI:59789"/>
    </ligand>
</feature>
<feature type="binding site" evidence="1">
    <location>
        <position position="120"/>
    </location>
    <ligand>
        <name>S-adenosyl-L-methionine</name>
        <dbReference type="ChEBI" id="CHEBI:59789"/>
    </ligand>
</feature>
<gene>
    <name evidence="1" type="primary">ubiG</name>
    <name type="ordered locus">Bphyt_3011</name>
</gene>
<name>UBIG_PARPJ</name>
<comment type="function">
    <text evidence="1">O-methyltransferase that catalyzes the 2 O-methylation steps in the ubiquinone biosynthetic pathway.</text>
</comment>
<comment type="catalytic activity">
    <reaction evidence="1">
        <text>a 3-demethylubiquinol + S-adenosyl-L-methionine = a ubiquinol + S-adenosyl-L-homocysteine + H(+)</text>
        <dbReference type="Rhea" id="RHEA:44380"/>
        <dbReference type="Rhea" id="RHEA-COMP:9566"/>
        <dbReference type="Rhea" id="RHEA-COMP:10914"/>
        <dbReference type="ChEBI" id="CHEBI:15378"/>
        <dbReference type="ChEBI" id="CHEBI:17976"/>
        <dbReference type="ChEBI" id="CHEBI:57856"/>
        <dbReference type="ChEBI" id="CHEBI:59789"/>
        <dbReference type="ChEBI" id="CHEBI:84422"/>
        <dbReference type="EC" id="2.1.1.64"/>
    </reaction>
</comment>
<comment type="catalytic activity">
    <reaction evidence="1">
        <text>a 3-(all-trans-polyprenyl)benzene-1,2-diol + S-adenosyl-L-methionine = a 2-methoxy-6-(all-trans-polyprenyl)phenol + S-adenosyl-L-homocysteine + H(+)</text>
        <dbReference type="Rhea" id="RHEA:31411"/>
        <dbReference type="Rhea" id="RHEA-COMP:9550"/>
        <dbReference type="Rhea" id="RHEA-COMP:9551"/>
        <dbReference type="ChEBI" id="CHEBI:15378"/>
        <dbReference type="ChEBI" id="CHEBI:57856"/>
        <dbReference type="ChEBI" id="CHEBI:59789"/>
        <dbReference type="ChEBI" id="CHEBI:62729"/>
        <dbReference type="ChEBI" id="CHEBI:62731"/>
        <dbReference type="EC" id="2.1.1.222"/>
    </reaction>
</comment>
<comment type="pathway">
    <text evidence="1">Cofactor biosynthesis; ubiquinone biosynthesis.</text>
</comment>
<comment type="similarity">
    <text evidence="1">Belongs to the methyltransferase superfamily. UbiG/COQ3 family.</text>
</comment>
<reference key="1">
    <citation type="journal article" date="2011" name="J. Bacteriol.">
        <title>Complete genome sequence of the plant growth-promoting endophyte Burkholderia phytofirmans strain PsJN.</title>
        <authorList>
            <person name="Weilharter A."/>
            <person name="Mitter B."/>
            <person name="Shin M.V."/>
            <person name="Chain P.S."/>
            <person name="Nowak J."/>
            <person name="Sessitsch A."/>
        </authorList>
    </citation>
    <scope>NUCLEOTIDE SEQUENCE [LARGE SCALE GENOMIC DNA]</scope>
    <source>
        <strain>DSM 17436 / LMG 22146 / PsJN</strain>
    </source>
</reference>